<organism>
    <name type="scientific">Methylobacterium sp. (strain 4-46)</name>
    <dbReference type="NCBI Taxonomy" id="426117"/>
    <lineage>
        <taxon>Bacteria</taxon>
        <taxon>Pseudomonadati</taxon>
        <taxon>Pseudomonadota</taxon>
        <taxon>Alphaproteobacteria</taxon>
        <taxon>Hyphomicrobiales</taxon>
        <taxon>Methylobacteriaceae</taxon>
        <taxon>Methylobacterium</taxon>
    </lineage>
</organism>
<accession>B0UGC4</accession>
<dbReference type="EC" id="6.1.1.7" evidence="1"/>
<dbReference type="EMBL" id="CP000943">
    <property type="protein sequence ID" value="ACA20121.1"/>
    <property type="molecule type" value="Genomic_DNA"/>
</dbReference>
<dbReference type="RefSeq" id="WP_012335499.1">
    <property type="nucleotide sequence ID" value="NC_010511.1"/>
</dbReference>
<dbReference type="SMR" id="B0UGC4"/>
<dbReference type="STRING" id="426117.M446_5834"/>
<dbReference type="KEGG" id="met:M446_5834"/>
<dbReference type="eggNOG" id="COG0013">
    <property type="taxonomic scope" value="Bacteria"/>
</dbReference>
<dbReference type="HOGENOM" id="CLU_004485_1_1_5"/>
<dbReference type="GO" id="GO:0005829">
    <property type="term" value="C:cytosol"/>
    <property type="evidence" value="ECO:0007669"/>
    <property type="project" value="TreeGrafter"/>
</dbReference>
<dbReference type="GO" id="GO:0004813">
    <property type="term" value="F:alanine-tRNA ligase activity"/>
    <property type="evidence" value="ECO:0007669"/>
    <property type="project" value="UniProtKB-UniRule"/>
</dbReference>
<dbReference type="GO" id="GO:0002161">
    <property type="term" value="F:aminoacyl-tRNA deacylase activity"/>
    <property type="evidence" value="ECO:0007669"/>
    <property type="project" value="TreeGrafter"/>
</dbReference>
<dbReference type="GO" id="GO:0005524">
    <property type="term" value="F:ATP binding"/>
    <property type="evidence" value="ECO:0007669"/>
    <property type="project" value="UniProtKB-UniRule"/>
</dbReference>
<dbReference type="GO" id="GO:0000049">
    <property type="term" value="F:tRNA binding"/>
    <property type="evidence" value="ECO:0007669"/>
    <property type="project" value="UniProtKB-KW"/>
</dbReference>
<dbReference type="GO" id="GO:0008270">
    <property type="term" value="F:zinc ion binding"/>
    <property type="evidence" value="ECO:0007669"/>
    <property type="project" value="UniProtKB-UniRule"/>
</dbReference>
<dbReference type="GO" id="GO:0006419">
    <property type="term" value="P:alanyl-tRNA aminoacylation"/>
    <property type="evidence" value="ECO:0007669"/>
    <property type="project" value="UniProtKB-UniRule"/>
</dbReference>
<dbReference type="GO" id="GO:0045892">
    <property type="term" value="P:negative regulation of DNA-templated transcription"/>
    <property type="evidence" value="ECO:0007669"/>
    <property type="project" value="TreeGrafter"/>
</dbReference>
<dbReference type="CDD" id="cd00673">
    <property type="entry name" value="AlaRS_core"/>
    <property type="match status" value="1"/>
</dbReference>
<dbReference type="FunFam" id="2.40.30.130:FF:000001">
    <property type="entry name" value="Alanine--tRNA ligase"/>
    <property type="match status" value="1"/>
</dbReference>
<dbReference type="FunFam" id="3.10.310.40:FF:000001">
    <property type="entry name" value="Alanine--tRNA ligase"/>
    <property type="match status" value="1"/>
</dbReference>
<dbReference type="FunFam" id="3.30.54.20:FF:000001">
    <property type="entry name" value="Alanine--tRNA ligase"/>
    <property type="match status" value="1"/>
</dbReference>
<dbReference type="FunFam" id="3.30.930.10:FF:000004">
    <property type="entry name" value="Alanine--tRNA ligase"/>
    <property type="match status" value="1"/>
</dbReference>
<dbReference type="FunFam" id="3.30.980.10:FF:000004">
    <property type="entry name" value="Alanine--tRNA ligase, cytoplasmic"/>
    <property type="match status" value="1"/>
</dbReference>
<dbReference type="Gene3D" id="2.40.30.130">
    <property type="match status" value="1"/>
</dbReference>
<dbReference type="Gene3D" id="3.10.310.40">
    <property type="match status" value="1"/>
</dbReference>
<dbReference type="Gene3D" id="3.30.54.20">
    <property type="match status" value="1"/>
</dbReference>
<dbReference type="Gene3D" id="6.10.250.550">
    <property type="match status" value="1"/>
</dbReference>
<dbReference type="Gene3D" id="3.30.930.10">
    <property type="entry name" value="Bira Bifunctional Protein, Domain 2"/>
    <property type="match status" value="1"/>
</dbReference>
<dbReference type="Gene3D" id="3.30.980.10">
    <property type="entry name" value="Threonyl-trna Synthetase, Chain A, domain 2"/>
    <property type="match status" value="1"/>
</dbReference>
<dbReference type="HAMAP" id="MF_00036_B">
    <property type="entry name" value="Ala_tRNA_synth_B"/>
    <property type="match status" value="1"/>
</dbReference>
<dbReference type="InterPro" id="IPR045864">
    <property type="entry name" value="aa-tRNA-synth_II/BPL/LPL"/>
</dbReference>
<dbReference type="InterPro" id="IPR002318">
    <property type="entry name" value="Ala-tRNA-lgiase_IIc"/>
</dbReference>
<dbReference type="InterPro" id="IPR018162">
    <property type="entry name" value="Ala-tRNA-ligase_IIc_anticod-bd"/>
</dbReference>
<dbReference type="InterPro" id="IPR018165">
    <property type="entry name" value="Ala-tRNA-synth_IIc_core"/>
</dbReference>
<dbReference type="InterPro" id="IPR018164">
    <property type="entry name" value="Ala-tRNA-synth_IIc_N"/>
</dbReference>
<dbReference type="InterPro" id="IPR050058">
    <property type="entry name" value="Ala-tRNA_ligase"/>
</dbReference>
<dbReference type="InterPro" id="IPR023033">
    <property type="entry name" value="Ala_tRNA_ligase_euk/bac"/>
</dbReference>
<dbReference type="InterPro" id="IPR003156">
    <property type="entry name" value="DHHA1_dom"/>
</dbReference>
<dbReference type="InterPro" id="IPR018163">
    <property type="entry name" value="Thr/Ala-tRNA-synth_IIc_edit"/>
</dbReference>
<dbReference type="InterPro" id="IPR009000">
    <property type="entry name" value="Transl_B-barrel_sf"/>
</dbReference>
<dbReference type="InterPro" id="IPR012947">
    <property type="entry name" value="tRNA_SAD"/>
</dbReference>
<dbReference type="NCBIfam" id="TIGR00344">
    <property type="entry name" value="alaS"/>
    <property type="match status" value="1"/>
</dbReference>
<dbReference type="PANTHER" id="PTHR11777:SF9">
    <property type="entry name" value="ALANINE--TRNA LIGASE, CYTOPLASMIC"/>
    <property type="match status" value="1"/>
</dbReference>
<dbReference type="PANTHER" id="PTHR11777">
    <property type="entry name" value="ALANYL-TRNA SYNTHETASE"/>
    <property type="match status" value="1"/>
</dbReference>
<dbReference type="Pfam" id="PF02272">
    <property type="entry name" value="DHHA1"/>
    <property type="match status" value="1"/>
</dbReference>
<dbReference type="Pfam" id="PF01411">
    <property type="entry name" value="tRNA-synt_2c"/>
    <property type="match status" value="1"/>
</dbReference>
<dbReference type="Pfam" id="PF07973">
    <property type="entry name" value="tRNA_SAD"/>
    <property type="match status" value="1"/>
</dbReference>
<dbReference type="PRINTS" id="PR00980">
    <property type="entry name" value="TRNASYNTHALA"/>
</dbReference>
<dbReference type="SMART" id="SM00863">
    <property type="entry name" value="tRNA_SAD"/>
    <property type="match status" value="1"/>
</dbReference>
<dbReference type="SUPFAM" id="SSF55681">
    <property type="entry name" value="Class II aaRS and biotin synthetases"/>
    <property type="match status" value="1"/>
</dbReference>
<dbReference type="SUPFAM" id="SSF101353">
    <property type="entry name" value="Putative anticodon-binding domain of alanyl-tRNA synthetase (AlaRS)"/>
    <property type="match status" value="1"/>
</dbReference>
<dbReference type="SUPFAM" id="SSF55186">
    <property type="entry name" value="ThrRS/AlaRS common domain"/>
    <property type="match status" value="1"/>
</dbReference>
<dbReference type="SUPFAM" id="SSF50447">
    <property type="entry name" value="Translation proteins"/>
    <property type="match status" value="1"/>
</dbReference>
<dbReference type="PROSITE" id="PS50860">
    <property type="entry name" value="AA_TRNA_LIGASE_II_ALA"/>
    <property type="match status" value="1"/>
</dbReference>
<feature type="chain" id="PRO_0000347675" description="Alanine--tRNA ligase">
    <location>
        <begin position="1"/>
        <end position="886"/>
    </location>
</feature>
<feature type="binding site" evidence="1">
    <location>
        <position position="564"/>
    </location>
    <ligand>
        <name>Zn(2+)</name>
        <dbReference type="ChEBI" id="CHEBI:29105"/>
    </ligand>
</feature>
<feature type="binding site" evidence="1">
    <location>
        <position position="568"/>
    </location>
    <ligand>
        <name>Zn(2+)</name>
        <dbReference type="ChEBI" id="CHEBI:29105"/>
    </ligand>
</feature>
<feature type="binding site" evidence="1">
    <location>
        <position position="676"/>
    </location>
    <ligand>
        <name>Zn(2+)</name>
        <dbReference type="ChEBI" id="CHEBI:29105"/>
    </ligand>
</feature>
<feature type="binding site" evidence="1">
    <location>
        <position position="680"/>
    </location>
    <ligand>
        <name>Zn(2+)</name>
        <dbReference type="ChEBI" id="CHEBI:29105"/>
    </ligand>
</feature>
<evidence type="ECO:0000255" key="1">
    <source>
        <dbReference type="HAMAP-Rule" id="MF_00036"/>
    </source>
</evidence>
<reference key="1">
    <citation type="submission" date="2008-02" db="EMBL/GenBank/DDBJ databases">
        <title>Complete sequence of chromosome of Methylobacterium sp. 4-46.</title>
        <authorList>
            <consortium name="US DOE Joint Genome Institute"/>
            <person name="Copeland A."/>
            <person name="Lucas S."/>
            <person name="Lapidus A."/>
            <person name="Glavina del Rio T."/>
            <person name="Dalin E."/>
            <person name="Tice H."/>
            <person name="Bruce D."/>
            <person name="Goodwin L."/>
            <person name="Pitluck S."/>
            <person name="Chertkov O."/>
            <person name="Brettin T."/>
            <person name="Detter J.C."/>
            <person name="Han C."/>
            <person name="Kuske C.R."/>
            <person name="Schmutz J."/>
            <person name="Larimer F."/>
            <person name="Land M."/>
            <person name="Hauser L."/>
            <person name="Kyrpides N."/>
            <person name="Ivanova N."/>
            <person name="Marx C.J."/>
            <person name="Richardson P."/>
        </authorList>
    </citation>
    <scope>NUCLEOTIDE SEQUENCE [LARGE SCALE GENOMIC DNA]</scope>
    <source>
        <strain>4-46</strain>
    </source>
</reference>
<comment type="function">
    <text evidence="1">Catalyzes the attachment of alanine to tRNA(Ala) in a two-step reaction: alanine is first activated by ATP to form Ala-AMP and then transferred to the acceptor end of tRNA(Ala). Also edits incorrectly charged Ser-tRNA(Ala) and Gly-tRNA(Ala) via its editing domain.</text>
</comment>
<comment type="catalytic activity">
    <reaction evidence="1">
        <text>tRNA(Ala) + L-alanine + ATP = L-alanyl-tRNA(Ala) + AMP + diphosphate</text>
        <dbReference type="Rhea" id="RHEA:12540"/>
        <dbReference type="Rhea" id="RHEA-COMP:9657"/>
        <dbReference type="Rhea" id="RHEA-COMP:9923"/>
        <dbReference type="ChEBI" id="CHEBI:30616"/>
        <dbReference type="ChEBI" id="CHEBI:33019"/>
        <dbReference type="ChEBI" id="CHEBI:57972"/>
        <dbReference type="ChEBI" id="CHEBI:78442"/>
        <dbReference type="ChEBI" id="CHEBI:78497"/>
        <dbReference type="ChEBI" id="CHEBI:456215"/>
        <dbReference type="EC" id="6.1.1.7"/>
    </reaction>
</comment>
<comment type="cofactor">
    <cofactor evidence="1">
        <name>Zn(2+)</name>
        <dbReference type="ChEBI" id="CHEBI:29105"/>
    </cofactor>
    <text evidence="1">Binds 1 zinc ion per subunit.</text>
</comment>
<comment type="subcellular location">
    <subcellularLocation>
        <location evidence="1">Cytoplasm</location>
    </subcellularLocation>
</comment>
<comment type="domain">
    <text evidence="1">Consists of three domains; the N-terminal catalytic domain, the editing domain and the C-terminal C-Ala domain. The editing domain removes incorrectly charged amino acids, while the C-Ala domain, along with tRNA(Ala), serves as a bridge to cooperatively bring together the editing and aminoacylation centers thus stimulating deacylation of misacylated tRNAs.</text>
</comment>
<comment type="similarity">
    <text evidence="1">Belongs to the class-II aminoacyl-tRNA synthetase family.</text>
</comment>
<keyword id="KW-0030">Aminoacyl-tRNA synthetase</keyword>
<keyword id="KW-0067">ATP-binding</keyword>
<keyword id="KW-0963">Cytoplasm</keyword>
<keyword id="KW-0436">Ligase</keyword>
<keyword id="KW-0479">Metal-binding</keyword>
<keyword id="KW-0547">Nucleotide-binding</keyword>
<keyword id="KW-0648">Protein biosynthesis</keyword>
<keyword id="KW-0694">RNA-binding</keyword>
<keyword id="KW-0820">tRNA-binding</keyword>
<keyword id="KW-0862">Zinc</keyword>
<gene>
    <name evidence="1" type="primary">alaS</name>
    <name type="ordered locus">M446_5834</name>
</gene>
<name>SYA_METS4</name>
<protein>
    <recommendedName>
        <fullName evidence="1">Alanine--tRNA ligase</fullName>
        <ecNumber evidence="1">6.1.1.7</ecNumber>
    </recommendedName>
    <alternativeName>
        <fullName evidence="1">Alanyl-tRNA synthetase</fullName>
        <shortName evidence="1">AlaRS</shortName>
    </alternativeName>
</protein>
<proteinExistence type="inferred from homology"/>
<sequence length="886" mass="95627">MSGVNEIRSTFLDYFAKHGHEVVPSSPLVPRNDPTLMFTNAGMVQFKNVFTGVEKRPYHRAATAQKCVRAGGKHNDLDNVGYTARHHTFFEMLGNFSFGDYFKPLAIELAWNLVTKEFGLDRSKLLVTVYADDDDAATLWRKIAGFPEERIIRIGTSDNFWQMGDTGPCGPCSEIFIDQGPELWGGPPGSPEEDGDRFLEFWNLVFMQYEQIEPGNRVGLPRPSIDTGMGLERMAAILQGVKSNYDTDLFRSLIDAVAHQVGRPPEGAQTASYRVIADHLRAASFLVADGVLPGNEGRGYVLRRIMRRAMRHAQLLGARDPMMYRLVPTLVREMGQAYPELVRAESLISETLRLEETRFRRTLERGLSILDAETRDLSEGQNLSGETAFTLYDTYGFPLDLTQDALKSRGIGVDTDAFKAAMERQRAAARAAWAGSGEAATETLWYALRERVGATEFLGYEAETAEGVVTALVRGGVEVEALASGEEGLLVVSQTPFYGESGGQVGDTGTVAAAGLRARVTDTEKKLGDLFVHHVAVEEGRLTVGQAVELRVDHARRAAIRAHHSATHLLHEALRQVLGDHVAQKGSLVSPERLRFDFSHPKPMNDDEVAAVEEMANRVLLQNGPVVTKLMAVDDAIATGARALFGEKYGDEVRVVSMGEDQGGDGRRRTFSVELCGGTHVGRTGEIGLITVVGEGAVASGVRRIEAMTGDAARRHLAEESRRLAAVAGLLKVPPAEAADRLAALIEDRRRLERELSEARRKLAMGGGGAGEEPVREVAGVKLMARSVEGVEMRDLKSLADEGKKRLGSGVVAIVGVAPDGKAGLVVGVTDDLTDRFDAVALVRAGSERLGGKGGGGRRDMAQAGGPDGAAAQDALAAIEAALAAA</sequence>